<keyword id="KW-0997">Cell inner membrane</keyword>
<keyword id="KW-1003">Cell membrane</keyword>
<keyword id="KW-0201">Cytochrome c-type biogenesis</keyword>
<keyword id="KW-0349">Heme</keyword>
<keyword id="KW-0408">Iron</keyword>
<keyword id="KW-0472">Membrane</keyword>
<keyword id="KW-0479">Metal-binding</keyword>
<keyword id="KW-1185">Reference proteome</keyword>
<keyword id="KW-0735">Signal-anchor</keyword>
<keyword id="KW-0812">Transmembrane</keyword>
<keyword id="KW-1133">Transmembrane helix</keyword>
<evidence type="ECO:0000255" key="1">
    <source>
        <dbReference type="HAMAP-Rule" id="MF_01959"/>
    </source>
</evidence>
<evidence type="ECO:0000256" key="2">
    <source>
        <dbReference type="SAM" id="MobiDB-lite"/>
    </source>
</evidence>
<protein>
    <recommendedName>
        <fullName evidence="1">Cytochrome c-type biogenesis protein CcmE</fullName>
    </recommendedName>
    <alternativeName>
        <fullName evidence="1">Cytochrome c maturation protein E</fullName>
    </alternativeName>
    <alternativeName>
        <fullName evidence="1">Heme chaperone CcmE</fullName>
    </alternativeName>
</protein>
<reference key="1">
    <citation type="journal article" date="2001" name="Proc. Natl. Acad. Sci. U.S.A.">
        <title>Complete genome sequence of Caulobacter crescentus.</title>
        <authorList>
            <person name="Nierman W.C."/>
            <person name="Feldblyum T.V."/>
            <person name="Laub M.T."/>
            <person name="Paulsen I.T."/>
            <person name="Nelson K.E."/>
            <person name="Eisen J.A."/>
            <person name="Heidelberg J.F."/>
            <person name="Alley M.R.K."/>
            <person name="Ohta N."/>
            <person name="Maddock J.R."/>
            <person name="Potocka I."/>
            <person name="Nelson W.C."/>
            <person name="Newton A."/>
            <person name="Stephens C."/>
            <person name="Phadke N.D."/>
            <person name="Ely B."/>
            <person name="DeBoy R.T."/>
            <person name="Dodson R.J."/>
            <person name="Durkin A.S."/>
            <person name="Gwinn M.L."/>
            <person name="Haft D.H."/>
            <person name="Kolonay J.F."/>
            <person name="Smit J."/>
            <person name="Craven M.B."/>
            <person name="Khouri H.M."/>
            <person name="Shetty J."/>
            <person name="Berry K.J."/>
            <person name="Utterback T.R."/>
            <person name="Tran K."/>
            <person name="Wolf A.M."/>
            <person name="Vamathevan J.J."/>
            <person name="Ermolaeva M.D."/>
            <person name="White O."/>
            <person name="Salzberg S.L."/>
            <person name="Venter J.C."/>
            <person name="Shapiro L."/>
            <person name="Fraser C.M."/>
        </authorList>
    </citation>
    <scope>NUCLEOTIDE SEQUENCE [LARGE SCALE GENOMIC DNA]</scope>
    <source>
        <strain>ATCC 19089 / CIP 103742 / CB 15</strain>
    </source>
</reference>
<organism>
    <name type="scientific">Caulobacter vibrioides (strain ATCC 19089 / CIP 103742 / CB 15)</name>
    <name type="common">Caulobacter crescentus</name>
    <dbReference type="NCBI Taxonomy" id="190650"/>
    <lineage>
        <taxon>Bacteria</taxon>
        <taxon>Pseudomonadati</taxon>
        <taxon>Pseudomonadota</taxon>
        <taxon>Alphaproteobacteria</taxon>
        <taxon>Caulobacterales</taxon>
        <taxon>Caulobacteraceae</taxon>
        <taxon>Caulobacter</taxon>
    </lineage>
</organism>
<feature type="chain" id="PRO_0000238802" description="Cytochrome c-type biogenesis protein CcmE">
    <location>
        <begin position="1"/>
        <end position="162"/>
    </location>
</feature>
<feature type="topological domain" description="Cytoplasmic" evidence="1">
    <location>
        <begin position="1"/>
        <end position="13"/>
    </location>
</feature>
<feature type="transmembrane region" description="Helical; Signal-anchor for type II membrane protein" evidence="1">
    <location>
        <begin position="14"/>
        <end position="34"/>
    </location>
</feature>
<feature type="topological domain" description="Periplasmic" evidence="1">
    <location>
        <begin position="35"/>
        <end position="162"/>
    </location>
</feature>
<feature type="region of interest" description="Disordered" evidence="2">
    <location>
        <begin position="140"/>
        <end position="162"/>
    </location>
</feature>
<feature type="compositionally biased region" description="Basic and acidic residues" evidence="2">
    <location>
        <begin position="140"/>
        <end position="151"/>
    </location>
</feature>
<feature type="binding site" description="covalent" evidence="1">
    <location>
        <position position="128"/>
    </location>
    <ligand>
        <name>heme</name>
        <dbReference type="ChEBI" id="CHEBI:30413"/>
    </ligand>
</feature>
<feature type="binding site" description="axial binding residue" evidence="1">
    <location>
        <position position="132"/>
    </location>
    <ligand>
        <name>heme</name>
        <dbReference type="ChEBI" id="CHEBI:30413"/>
    </ligand>
    <ligandPart>
        <name>Fe</name>
        <dbReference type="ChEBI" id="CHEBI:18248"/>
    </ligandPart>
</feature>
<comment type="function">
    <text evidence="1">Heme chaperone required for the biogenesis of c-type cytochromes. Transiently binds heme delivered by CcmC and transfers the heme to apo-cytochromes in a process facilitated by CcmF and CcmH.</text>
</comment>
<comment type="subcellular location">
    <subcellularLocation>
        <location evidence="1">Cell inner membrane</location>
        <topology evidence="1">Single-pass type II membrane protein</topology>
        <orientation evidence="1">Periplasmic side</orientation>
    </subcellularLocation>
</comment>
<comment type="similarity">
    <text evidence="1">Belongs to the CcmE/CycJ family.</text>
</comment>
<proteinExistence type="inferred from homology"/>
<name>CCME_CAUVC</name>
<dbReference type="EMBL" id="AE005673">
    <property type="protein sequence ID" value="AAK24725.1"/>
    <property type="molecule type" value="Genomic_DNA"/>
</dbReference>
<dbReference type="PIR" id="A87591">
    <property type="entry name" value="A87591"/>
</dbReference>
<dbReference type="RefSeq" id="NP_421557.1">
    <property type="nucleotide sequence ID" value="NC_002696.2"/>
</dbReference>
<dbReference type="RefSeq" id="WP_010920602.1">
    <property type="nucleotide sequence ID" value="NC_002696.2"/>
</dbReference>
<dbReference type="SMR" id="Q9A4R9"/>
<dbReference type="STRING" id="190650.CC_2761"/>
<dbReference type="EnsemblBacteria" id="AAK24725">
    <property type="protein sequence ID" value="AAK24725"/>
    <property type="gene ID" value="CC_2761"/>
</dbReference>
<dbReference type="KEGG" id="ccr:CC_2761"/>
<dbReference type="PATRIC" id="fig|190650.5.peg.2763"/>
<dbReference type="eggNOG" id="COG2332">
    <property type="taxonomic scope" value="Bacteria"/>
</dbReference>
<dbReference type="HOGENOM" id="CLU_079503_1_1_5"/>
<dbReference type="BioCyc" id="CAULO:CC2761-MONOMER"/>
<dbReference type="Proteomes" id="UP000001816">
    <property type="component" value="Chromosome"/>
</dbReference>
<dbReference type="GO" id="GO:0005886">
    <property type="term" value="C:plasma membrane"/>
    <property type="evidence" value="ECO:0007669"/>
    <property type="project" value="UniProtKB-SubCell"/>
</dbReference>
<dbReference type="GO" id="GO:0020037">
    <property type="term" value="F:heme binding"/>
    <property type="evidence" value="ECO:0007669"/>
    <property type="project" value="InterPro"/>
</dbReference>
<dbReference type="GO" id="GO:0046872">
    <property type="term" value="F:metal ion binding"/>
    <property type="evidence" value="ECO:0007669"/>
    <property type="project" value="UniProtKB-KW"/>
</dbReference>
<dbReference type="GO" id="GO:0017004">
    <property type="term" value="P:cytochrome complex assembly"/>
    <property type="evidence" value="ECO:0007669"/>
    <property type="project" value="UniProtKB-KW"/>
</dbReference>
<dbReference type="Gene3D" id="2.40.50.140">
    <property type="entry name" value="Nucleic acid-binding proteins"/>
    <property type="match status" value="1"/>
</dbReference>
<dbReference type="HAMAP" id="MF_01959">
    <property type="entry name" value="CcmE"/>
    <property type="match status" value="1"/>
</dbReference>
<dbReference type="InterPro" id="IPR004329">
    <property type="entry name" value="CcmE"/>
</dbReference>
<dbReference type="InterPro" id="IPR036127">
    <property type="entry name" value="CcmE-like_sf"/>
</dbReference>
<dbReference type="InterPro" id="IPR012340">
    <property type="entry name" value="NA-bd_OB-fold"/>
</dbReference>
<dbReference type="NCBIfam" id="NF009727">
    <property type="entry name" value="PRK13254.1-1"/>
    <property type="match status" value="1"/>
</dbReference>
<dbReference type="NCBIfam" id="NF009731">
    <property type="entry name" value="PRK13254.1-5"/>
    <property type="match status" value="1"/>
</dbReference>
<dbReference type="PANTHER" id="PTHR34128">
    <property type="entry name" value="CYTOCHROME C-TYPE BIOGENESIS PROTEIN CCME HOMOLOG, MITOCHONDRIAL"/>
    <property type="match status" value="1"/>
</dbReference>
<dbReference type="PANTHER" id="PTHR34128:SF2">
    <property type="entry name" value="CYTOCHROME C-TYPE BIOGENESIS PROTEIN CCME HOMOLOG, MITOCHONDRIAL"/>
    <property type="match status" value="1"/>
</dbReference>
<dbReference type="Pfam" id="PF03100">
    <property type="entry name" value="CcmE"/>
    <property type="match status" value="1"/>
</dbReference>
<dbReference type="SUPFAM" id="SSF82093">
    <property type="entry name" value="Heme chaperone CcmE"/>
    <property type="match status" value="1"/>
</dbReference>
<accession>Q9A4R9</accession>
<sequence length="162" mass="17606">MSFWPQSRKARRRLTILLAIAPVLALAVGLALYGLRDSISLFYTPAQAQEAKVSAGRKVQLGGLVQHGSVVKYPDGNVEFVIADQKATAKVVYHGDLPDLFREGQGIVAEGSFNPAGVFEAKLVLAKHDERYMPREVSKALKEQGEWRGEGADAPAYGSQKP</sequence>
<gene>
    <name evidence="1" type="primary">ccmE</name>
    <name evidence="1" type="synonym">cycJ</name>
    <name type="ordered locus">CC_2761</name>
</gene>